<gene>
    <name evidence="1" type="primary">dnaE2</name>
    <name type="ordered locus">TERTU_2929</name>
</gene>
<keyword id="KW-0963">Cytoplasm</keyword>
<keyword id="KW-0227">DNA damage</keyword>
<keyword id="KW-0234">DNA repair</keyword>
<keyword id="KW-0235">DNA replication</keyword>
<keyword id="KW-0239">DNA-directed DNA polymerase</keyword>
<keyword id="KW-0548">Nucleotidyltransferase</keyword>
<keyword id="KW-1185">Reference proteome</keyword>
<keyword id="KW-0808">Transferase</keyword>
<dbReference type="EC" id="2.7.7.7" evidence="1"/>
<dbReference type="EMBL" id="CP001614">
    <property type="protein sequence ID" value="ACR11138.1"/>
    <property type="molecule type" value="Genomic_DNA"/>
</dbReference>
<dbReference type="RefSeq" id="WP_015817250.1">
    <property type="nucleotide sequence ID" value="NC_012997.1"/>
</dbReference>
<dbReference type="SMR" id="C5BNE0"/>
<dbReference type="STRING" id="377629.TERTU_2929"/>
<dbReference type="KEGG" id="ttu:TERTU_2929"/>
<dbReference type="eggNOG" id="COG0587">
    <property type="taxonomic scope" value="Bacteria"/>
</dbReference>
<dbReference type="HOGENOM" id="CLU_001600_4_0_6"/>
<dbReference type="OrthoDB" id="9803237at2"/>
<dbReference type="Proteomes" id="UP000009080">
    <property type="component" value="Chromosome"/>
</dbReference>
<dbReference type="GO" id="GO:0005737">
    <property type="term" value="C:cytoplasm"/>
    <property type="evidence" value="ECO:0007669"/>
    <property type="project" value="UniProtKB-SubCell"/>
</dbReference>
<dbReference type="GO" id="GO:0008408">
    <property type="term" value="F:3'-5' exonuclease activity"/>
    <property type="evidence" value="ECO:0007669"/>
    <property type="project" value="InterPro"/>
</dbReference>
<dbReference type="GO" id="GO:0003887">
    <property type="term" value="F:DNA-directed DNA polymerase activity"/>
    <property type="evidence" value="ECO:0007669"/>
    <property type="project" value="UniProtKB-UniRule"/>
</dbReference>
<dbReference type="GO" id="GO:0003676">
    <property type="term" value="F:nucleic acid binding"/>
    <property type="evidence" value="ECO:0007669"/>
    <property type="project" value="InterPro"/>
</dbReference>
<dbReference type="GO" id="GO:0006281">
    <property type="term" value="P:DNA repair"/>
    <property type="evidence" value="ECO:0007669"/>
    <property type="project" value="UniProtKB-UniRule"/>
</dbReference>
<dbReference type="GO" id="GO:0006260">
    <property type="term" value="P:DNA replication"/>
    <property type="evidence" value="ECO:0007669"/>
    <property type="project" value="UniProtKB-KW"/>
</dbReference>
<dbReference type="CDD" id="cd04485">
    <property type="entry name" value="DnaE_OBF"/>
    <property type="match status" value="1"/>
</dbReference>
<dbReference type="CDD" id="cd07434">
    <property type="entry name" value="PHP_PolIIIA_DnaE2"/>
    <property type="match status" value="1"/>
</dbReference>
<dbReference type="Gene3D" id="1.10.150.870">
    <property type="match status" value="1"/>
</dbReference>
<dbReference type="Gene3D" id="3.20.20.140">
    <property type="entry name" value="Metal-dependent hydrolases"/>
    <property type="match status" value="1"/>
</dbReference>
<dbReference type="Gene3D" id="2.40.50.140">
    <property type="entry name" value="Nucleic acid-binding proteins"/>
    <property type="match status" value="1"/>
</dbReference>
<dbReference type="HAMAP" id="MF_01902">
    <property type="entry name" value="DNApol_error_prone"/>
    <property type="match status" value="1"/>
</dbReference>
<dbReference type="InterPro" id="IPR011708">
    <property type="entry name" value="DNA_pol3_alpha_NTPase_dom"/>
</dbReference>
<dbReference type="InterPro" id="IPR040982">
    <property type="entry name" value="DNA_pol3_finger"/>
</dbReference>
<dbReference type="InterPro" id="IPR023073">
    <property type="entry name" value="DnaE2"/>
</dbReference>
<dbReference type="InterPro" id="IPR004805">
    <property type="entry name" value="DnaE2/DnaE/PolC"/>
</dbReference>
<dbReference type="InterPro" id="IPR029460">
    <property type="entry name" value="DNAPol_HHH"/>
</dbReference>
<dbReference type="InterPro" id="IPR012340">
    <property type="entry name" value="NA-bd_OB-fold"/>
</dbReference>
<dbReference type="InterPro" id="IPR004365">
    <property type="entry name" value="NA-bd_OB_tRNA"/>
</dbReference>
<dbReference type="InterPro" id="IPR004013">
    <property type="entry name" value="PHP_dom"/>
</dbReference>
<dbReference type="InterPro" id="IPR003141">
    <property type="entry name" value="Pol/His_phosphatase_N"/>
</dbReference>
<dbReference type="InterPro" id="IPR016195">
    <property type="entry name" value="Pol/histidinol_Pase-like"/>
</dbReference>
<dbReference type="NCBIfam" id="TIGR00594">
    <property type="entry name" value="polc"/>
    <property type="match status" value="1"/>
</dbReference>
<dbReference type="NCBIfam" id="NF004225">
    <property type="entry name" value="PRK05672.1"/>
    <property type="match status" value="1"/>
</dbReference>
<dbReference type="PANTHER" id="PTHR32294">
    <property type="entry name" value="DNA POLYMERASE III SUBUNIT ALPHA"/>
    <property type="match status" value="1"/>
</dbReference>
<dbReference type="PANTHER" id="PTHR32294:SF4">
    <property type="entry name" value="ERROR-PRONE DNA POLYMERASE"/>
    <property type="match status" value="1"/>
</dbReference>
<dbReference type="Pfam" id="PF07733">
    <property type="entry name" value="DNA_pol3_alpha"/>
    <property type="match status" value="1"/>
</dbReference>
<dbReference type="Pfam" id="PF17657">
    <property type="entry name" value="DNA_pol3_finger"/>
    <property type="match status" value="1"/>
</dbReference>
<dbReference type="Pfam" id="PF14579">
    <property type="entry name" value="HHH_6"/>
    <property type="match status" value="1"/>
</dbReference>
<dbReference type="Pfam" id="PF02811">
    <property type="entry name" value="PHP"/>
    <property type="match status" value="1"/>
</dbReference>
<dbReference type="Pfam" id="PF01336">
    <property type="entry name" value="tRNA_anti-codon"/>
    <property type="match status" value="1"/>
</dbReference>
<dbReference type="SMART" id="SM00481">
    <property type="entry name" value="POLIIIAc"/>
    <property type="match status" value="1"/>
</dbReference>
<dbReference type="SUPFAM" id="SSF89550">
    <property type="entry name" value="PHP domain-like"/>
    <property type="match status" value="1"/>
</dbReference>
<feature type="chain" id="PRO_1000216167" description="Error-prone DNA polymerase">
    <location>
        <begin position="1"/>
        <end position="1033"/>
    </location>
</feature>
<reference key="1">
    <citation type="journal article" date="2009" name="PLoS ONE">
        <title>The complete genome of Teredinibacter turnerae T7901: an intracellular endosymbiont of marine wood-boring bivalves (shipworms).</title>
        <authorList>
            <person name="Yang J.C."/>
            <person name="Madupu R."/>
            <person name="Durkin A.S."/>
            <person name="Ekborg N.A."/>
            <person name="Pedamallu C.S."/>
            <person name="Hostetler J.B."/>
            <person name="Radune D."/>
            <person name="Toms B.S."/>
            <person name="Henrissat B."/>
            <person name="Coutinho P.M."/>
            <person name="Schwarz S."/>
            <person name="Field L."/>
            <person name="Trindade-Silva A.E."/>
            <person name="Soares C.A.G."/>
            <person name="Elshahawi S."/>
            <person name="Hanora A."/>
            <person name="Schmidt E.W."/>
            <person name="Haygood M.G."/>
            <person name="Posfai J."/>
            <person name="Benner J."/>
            <person name="Madinger C."/>
            <person name="Nove J."/>
            <person name="Anton B."/>
            <person name="Chaudhary K."/>
            <person name="Foster J."/>
            <person name="Holman A."/>
            <person name="Kumar S."/>
            <person name="Lessard P.A."/>
            <person name="Luyten Y.A."/>
            <person name="Slatko B."/>
            <person name="Wood N."/>
            <person name="Wu B."/>
            <person name="Teplitski M."/>
            <person name="Mougous J.D."/>
            <person name="Ward N."/>
            <person name="Eisen J.A."/>
            <person name="Badger J.H."/>
            <person name="Distel D.L."/>
        </authorList>
    </citation>
    <scope>NUCLEOTIDE SEQUENCE [LARGE SCALE GENOMIC DNA]</scope>
    <source>
        <strain>ATCC 39867 / T7901</strain>
    </source>
</reference>
<sequence>MAYAHLFTFSNFTFLRGASHPAEMVEQAYRLGYDAIALTDECSLAGAVKAHVMAEECGIKLIVGSYFKLSNNCELIALAPDRAAYAELSGFITLARRRADKGEYTAHMDDLRFRLQTCLIIWLPTANTATEDNARIFSAAFKQRLWLGVGHQLAGGEQRLFQQWQNLAATYQLPMVASHLALMHSAERKPLQDVLTAINHNTSVSQLGTRLQSNGENYLKAIDEVFYLYPPGLIKQTLLIAERCNFSLNELKYQYPQELVPKGLSPIAHLRALVDSGKARRWPGGVPAQAEAILAKELALIEELHYEYYFLTVYDIVAFARQQNILCQGRGSAANSVVCYCLFITEIAPGQINVLFERFISKERDEPPDIDVDFEHQRREDVIQYIYTKYSRQRAALAATVISYRSRSAIRDVGKALGLDPALVDHLAKSLAWWDRTGDLVKRIEAAGVQTERQLVQQFFALVQQIIGFPRHLSQHVGGFVITQDKVSDLVPVENASMPGRTVIQWDKEDLEAMGLLKVDILALGMLTALRKTLAMVNRYEPAIASLADIPPEDPHTYDMLCAADTVGVFQIESRAQMSMLPRLRPRTFYDLVIEIAIVRPGPIQGDMVHPYLRRRDGLEPVSYQSPDIADVLKPTLGVPIFQEQAIRLAMVAAGFSGGEADRLRRAMASWGKNGNLLQFEETFIQGMLNNGYELDFAHRLFEQIKGFGGYGFPESHSASFAILCYASSWLKCHHPAAFYCALLNSQPMGFYSPSQLIQDARRHGIPVLPVDVNHSEAESALEPANSYRTPWAIRLGFTRIKGLDSEAAQRIADNRAQQPYRDIQQLARRSGLSRADLQKLAAADALHSLAGNRHLAHWQAASVEAQAGLFDDEPPPGDALLTAPPSLEKDLTSDYNTTGLSLRVHPMGILRQEYPFSRCKQQRQLSGLSHGRFVQVAGLVTGRQRPGTAKGTLFLTLEDETGNINVVVWKSTQERYRKALLTSKLLIVKGHLERSTPTATTDATPVIHVVAGQLLDYSDRLESLALRSRDFH</sequence>
<protein>
    <recommendedName>
        <fullName evidence="1">Error-prone DNA polymerase</fullName>
        <ecNumber evidence="1">2.7.7.7</ecNumber>
    </recommendedName>
</protein>
<evidence type="ECO:0000255" key="1">
    <source>
        <dbReference type="HAMAP-Rule" id="MF_01902"/>
    </source>
</evidence>
<accession>C5BNE0</accession>
<proteinExistence type="inferred from homology"/>
<comment type="function">
    <text evidence="1">DNA polymerase involved in damage-induced mutagenesis and translesion synthesis (TLS). It is not the major replicative DNA polymerase.</text>
</comment>
<comment type="catalytic activity">
    <reaction evidence="1">
        <text>DNA(n) + a 2'-deoxyribonucleoside 5'-triphosphate = DNA(n+1) + diphosphate</text>
        <dbReference type="Rhea" id="RHEA:22508"/>
        <dbReference type="Rhea" id="RHEA-COMP:17339"/>
        <dbReference type="Rhea" id="RHEA-COMP:17340"/>
        <dbReference type="ChEBI" id="CHEBI:33019"/>
        <dbReference type="ChEBI" id="CHEBI:61560"/>
        <dbReference type="ChEBI" id="CHEBI:173112"/>
        <dbReference type="EC" id="2.7.7.7"/>
    </reaction>
</comment>
<comment type="subcellular location">
    <subcellularLocation>
        <location evidence="1">Cytoplasm</location>
    </subcellularLocation>
</comment>
<comment type="similarity">
    <text evidence="1">Belongs to the DNA polymerase type-C family. DnaE2 subfamily.</text>
</comment>
<organism>
    <name type="scientific">Teredinibacter turnerae (strain ATCC 39867 / T7901)</name>
    <dbReference type="NCBI Taxonomy" id="377629"/>
    <lineage>
        <taxon>Bacteria</taxon>
        <taxon>Pseudomonadati</taxon>
        <taxon>Pseudomonadota</taxon>
        <taxon>Gammaproteobacteria</taxon>
        <taxon>Cellvibrionales</taxon>
        <taxon>Cellvibrionaceae</taxon>
        <taxon>Teredinibacter</taxon>
    </lineage>
</organism>
<name>DNAE2_TERTT</name>